<accession>O29064</accession>
<organism>
    <name type="scientific">Archaeoglobus fulgidus (strain ATCC 49558 / DSM 4304 / JCM 9628 / NBRC 100126 / VC-16)</name>
    <dbReference type="NCBI Taxonomy" id="224325"/>
    <lineage>
        <taxon>Archaea</taxon>
        <taxon>Methanobacteriati</taxon>
        <taxon>Methanobacteriota</taxon>
        <taxon>Archaeoglobi</taxon>
        <taxon>Archaeoglobales</taxon>
        <taxon>Archaeoglobaceae</taxon>
        <taxon>Archaeoglobus</taxon>
    </lineage>
</organism>
<name>Y1204_ARCFU</name>
<evidence type="ECO:0000255" key="1"/>
<gene>
    <name type="ordered locus">AF_1204</name>
</gene>
<reference key="1">
    <citation type="journal article" date="1997" name="Nature">
        <title>The complete genome sequence of the hyperthermophilic, sulphate-reducing archaeon Archaeoglobus fulgidus.</title>
        <authorList>
            <person name="Klenk H.-P."/>
            <person name="Clayton R.A."/>
            <person name="Tomb J.-F."/>
            <person name="White O."/>
            <person name="Nelson K.E."/>
            <person name="Ketchum K.A."/>
            <person name="Dodson R.J."/>
            <person name="Gwinn M.L."/>
            <person name="Hickey E.K."/>
            <person name="Peterson J.D."/>
            <person name="Richardson D.L."/>
            <person name="Kerlavage A.R."/>
            <person name="Graham D.E."/>
            <person name="Kyrpides N.C."/>
            <person name="Fleischmann R.D."/>
            <person name="Quackenbush J."/>
            <person name="Lee N.H."/>
            <person name="Sutton G.G."/>
            <person name="Gill S.R."/>
            <person name="Kirkness E.F."/>
            <person name="Dougherty B.A."/>
            <person name="McKenney K."/>
            <person name="Adams M.D."/>
            <person name="Loftus B.J."/>
            <person name="Peterson S.N."/>
            <person name="Reich C.I."/>
            <person name="McNeil L.K."/>
            <person name="Badger J.H."/>
            <person name="Glodek A."/>
            <person name="Zhou L."/>
            <person name="Overbeek R."/>
            <person name="Gocayne J.D."/>
            <person name="Weidman J.F."/>
            <person name="McDonald L.A."/>
            <person name="Utterback T.R."/>
            <person name="Cotton M.D."/>
            <person name="Spriggs T."/>
            <person name="Artiach P."/>
            <person name="Kaine B.P."/>
            <person name="Sykes S.M."/>
            <person name="Sadow P.W."/>
            <person name="D'Andrea K.P."/>
            <person name="Bowman C."/>
            <person name="Fujii C."/>
            <person name="Garland S.A."/>
            <person name="Mason T.M."/>
            <person name="Olsen G.J."/>
            <person name="Fraser C.M."/>
            <person name="Smith H.O."/>
            <person name="Woese C.R."/>
            <person name="Venter J.C."/>
        </authorList>
    </citation>
    <scope>NUCLEOTIDE SEQUENCE [LARGE SCALE GENOMIC DNA]</scope>
    <source>
        <strain>ATCC 49558 / DSM 4304 / JCM 9628 / NBRC 100126 / VC-16</strain>
    </source>
</reference>
<feature type="signal peptide" evidence="1">
    <location>
        <begin position="1"/>
        <end position="27"/>
    </location>
</feature>
<feature type="chain" id="PRO_0000013654" description="Uncharacterized protein AF_1204">
    <location>
        <begin position="28"/>
        <end position="40"/>
    </location>
</feature>
<protein>
    <recommendedName>
        <fullName>Uncharacterized protein AF_1204</fullName>
    </recommendedName>
</protein>
<keyword id="KW-1185">Reference proteome</keyword>
<keyword id="KW-0732">Signal</keyword>
<proteinExistence type="inferred from homology"/>
<sequence length="40" mass="4399">MFPADVILQCFGFSVGIALVGYVISLFLDWSEEEGDEDDA</sequence>
<dbReference type="EMBL" id="AE000782">
    <property type="protein sequence ID" value="AAB90049.1"/>
    <property type="molecule type" value="Genomic_DNA"/>
</dbReference>
<dbReference type="PIR" id="C69400">
    <property type="entry name" value="C69400"/>
</dbReference>
<dbReference type="SMR" id="O29064"/>
<dbReference type="PaxDb" id="224325-AF_1204"/>
<dbReference type="EnsemblBacteria" id="AAB90049">
    <property type="protein sequence ID" value="AAB90049"/>
    <property type="gene ID" value="AF_1204"/>
</dbReference>
<dbReference type="KEGG" id="afu:AF_1204"/>
<dbReference type="HOGENOM" id="CLU_3282642_0_0_2"/>
<dbReference type="Proteomes" id="UP000002199">
    <property type="component" value="Chromosome"/>
</dbReference>